<keyword id="KW-0002">3D-structure</keyword>
<keyword id="KW-0007">Acetylation</keyword>
<keyword id="KW-0067">ATP-binding</keyword>
<keyword id="KW-0903">Direct protein sequencing</keyword>
<keyword id="KW-0418">Kinase</keyword>
<keyword id="KW-0547">Nucleotide-binding</keyword>
<keyword id="KW-1267">Proteomics identification</keyword>
<keyword id="KW-1185">Reference proteome</keyword>
<keyword id="KW-0808">Transferase</keyword>
<proteinExistence type="evidence at protein level"/>
<dbReference type="EC" id="2.7.1.171" evidence="4 5"/>
<dbReference type="EC" id="2.7.1.172" evidence="7"/>
<dbReference type="EMBL" id="AJ404615">
    <property type="protein sequence ID" value="CAC16393.1"/>
    <property type="molecule type" value="mRNA"/>
</dbReference>
<dbReference type="EMBL" id="BC042680">
    <property type="protein sequence ID" value="AAH42680.1"/>
    <property type="molecule type" value="mRNA"/>
</dbReference>
<dbReference type="CCDS" id="CCDS11818.1"/>
<dbReference type="RefSeq" id="NP_071441.1">
    <property type="nucleotide sequence ID" value="NM_022158.4"/>
</dbReference>
<dbReference type="PDB" id="8UE1">
    <property type="method" value="X-ray"/>
    <property type="resolution" value="2.85 A"/>
    <property type="chains" value="A=1-309"/>
</dbReference>
<dbReference type="PDB" id="9CX8">
    <property type="method" value="X-ray"/>
    <property type="resolution" value="1.67 A"/>
    <property type="chains" value="A/B=1-116, A/B=139-309"/>
</dbReference>
<dbReference type="PDB" id="9CXM">
    <property type="method" value="X-ray"/>
    <property type="resolution" value="1.76 A"/>
    <property type="chains" value="A/B=1-116, A/B=139-309"/>
</dbReference>
<dbReference type="PDB" id="9CXN">
    <property type="method" value="X-ray"/>
    <property type="resolution" value="1.90 A"/>
    <property type="chains" value="A/B=1-116, A/B=139-309"/>
</dbReference>
<dbReference type="PDB" id="9CXO">
    <property type="method" value="X-ray"/>
    <property type="resolution" value="2.32 A"/>
    <property type="chains" value="A/B=1-116, A/B=139-309"/>
</dbReference>
<dbReference type="PDB" id="9CXV">
    <property type="method" value="X-ray"/>
    <property type="resolution" value="1.80 A"/>
    <property type="chains" value="A/B=1-116, A/B=139-309"/>
</dbReference>
<dbReference type="PDB" id="9CXW">
    <property type="method" value="X-ray"/>
    <property type="resolution" value="1.80 A"/>
    <property type="chains" value="A/B=1-116, A/B=139-309"/>
</dbReference>
<dbReference type="PDBsum" id="8UE1"/>
<dbReference type="PDBsum" id="9CX8"/>
<dbReference type="PDBsum" id="9CXM"/>
<dbReference type="PDBsum" id="9CXN"/>
<dbReference type="PDBsum" id="9CXO"/>
<dbReference type="PDBsum" id="9CXV"/>
<dbReference type="PDBsum" id="9CXW"/>
<dbReference type="SMR" id="Q9H479"/>
<dbReference type="BioGRID" id="122075">
    <property type="interactions" value="17"/>
</dbReference>
<dbReference type="FunCoup" id="Q9H479">
    <property type="interactions" value="64"/>
</dbReference>
<dbReference type="IntAct" id="Q9H479">
    <property type="interactions" value="10"/>
</dbReference>
<dbReference type="STRING" id="9606.ENSP00000300784"/>
<dbReference type="GlyGen" id="Q9H479">
    <property type="glycosylation" value="1 site, 1 O-linked glycan (1 site)"/>
</dbReference>
<dbReference type="iPTMnet" id="Q9H479"/>
<dbReference type="PhosphoSitePlus" id="Q9H479"/>
<dbReference type="SwissPalm" id="Q9H479"/>
<dbReference type="BioMuta" id="FN3K"/>
<dbReference type="DMDM" id="13959371"/>
<dbReference type="jPOST" id="Q9H479"/>
<dbReference type="MassIVE" id="Q9H479"/>
<dbReference type="PaxDb" id="9606-ENSP00000300784"/>
<dbReference type="PeptideAtlas" id="Q9H479"/>
<dbReference type="ProteomicsDB" id="80792"/>
<dbReference type="Pumba" id="Q9H479"/>
<dbReference type="Antibodypedia" id="33043">
    <property type="antibodies" value="175 antibodies from 26 providers"/>
</dbReference>
<dbReference type="DNASU" id="64122"/>
<dbReference type="Ensembl" id="ENST00000300784.8">
    <property type="protein sequence ID" value="ENSP00000300784.7"/>
    <property type="gene ID" value="ENSG00000167363.14"/>
</dbReference>
<dbReference type="GeneID" id="64122"/>
<dbReference type="KEGG" id="hsa:64122"/>
<dbReference type="MANE-Select" id="ENST00000300784.8">
    <property type="protein sequence ID" value="ENSP00000300784.7"/>
    <property type="RefSeq nucleotide sequence ID" value="NM_022158.4"/>
    <property type="RefSeq protein sequence ID" value="NP_071441.1"/>
</dbReference>
<dbReference type="UCSC" id="uc010wvs.2">
    <property type="organism name" value="human"/>
</dbReference>
<dbReference type="AGR" id="HGNC:24822"/>
<dbReference type="CTD" id="64122"/>
<dbReference type="DisGeNET" id="64122"/>
<dbReference type="GeneCards" id="FN3K"/>
<dbReference type="HGNC" id="HGNC:24822">
    <property type="gene designation" value="FN3K"/>
</dbReference>
<dbReference type="HPA" id="ENSG00000167363">
    <property type="expression patterns" value="Low tissue specificity"/>
</dbReference>
<dbReference type="MIM" id="608425">
    <property type="type" value="gene"/>
</dbReference>
<dbReference type="neXtProt" id="NX_Q9H479"/>
<dbReference type="OpenTargets" id="ENSG00000167363"/>
<dbReference type="PharmGKB" id="PA134870460"/>
<dbReference type="VEuPathDB" id="HostDB:ENSG00000167363"/>
<dbReference type="eggNOG" id="KOG3021">
    <property type="taxonomic scope" value="Eukaryota"/>
</dbReference>
<dbReference type="GeneTree" id="ENSGT00390000005730"/>
<dbReference type="HOGENOM" id="CLU_036517_0_1_1"/>
<dbReference type="InParanoid" id="Q9H479"/>
<dbReference type="OMA" id="CNRFGDE"/>
<dbReference type="OrthoDB" id="5772781at2759"/>
<dbReference type="PAN-GO" id="Q9H479">
    <property type="GO annotations" value="2 GO annotations based on evolutionary models"/>
</dbReference>
<dbReference type="PhylomeDB" id="Q9H479"/>
<dbReference type="TreeFam" id="TF313452"/>
<dbReference type="BioCyc" id="MetaCyc:ENSG00000167363-MONOMER"/>
<dbReference type="BRENDA" id="2.7.1.171">
    <property type="organism ID" value="2681"/>
</dbReference>
<dbReference type="PathwayCommons" id="Q9H479"/>
<dbReference type="Reactome" id="R-HSA-163841">
    <property type="pathway name" value="Gamma carboxylation, hypusinylation, hydroxylation, and arylsulfatase activation"/>
</dbReference>
<dbReference type="SignaLink" id="Q9H479"/>
<dbReference type="BioGRID-ORCS" id="64122">
    <property type="hits" value="13 hits in 1158 CRISPR screens"/>
</dbReference>
<dbReference type="CD-CODE" id="FB4E32DD">
    <property type="entry name" value="Presynaptic clusters and postsynaptic densities"/>
</dbReference>
<dbReference type="ChiTaRS" id="FN3K">
    <property type="organism name" value="human"/>
</dbReference>
<dbReference type="GeneWiki" id="FN3K"/>
<dbReference type="GeneWiki" id="Fructosamine-3-kinase"/>
<dbReference type="GenomeRNAi" id="64122"/>
<dbReference type="Pharos" id="Q9H479">
    <property type="development level" value="Tbio"/>
</dbReference>
<dbReference type="PRO" id="PR:Q9H479"/>
<dbReference type="Proteomes" id="UP000005640">
    <property type="component" value="Chromosome 17"/>
</dbReference>
<dbReference type="RNAct" id="Q9H479">
    <property type="molecule type" value="protein"/>
</dbReference>
<dbReference type="Bgee" id="ENSG00000167363">
    <property type="expression patterns" value="Expressed in sural nerve and 92 other cell types or tissues"/>
</dbReference>
<dbReference type="GO" id="GO:0005829">
    <property type="term" value="C:cytosol"/>
    <property type="evidence" value="ECO:0000304"/>
    <property type="project" value="Reactome"/>
</dbReference>
<dbReference type="GO" id="GO:0005739">
    <property type="term" value="C:mitochondrion"/>
    <property type="evidence" value="ECO:0000314"/>
    <property type="project" value="HPA"/>
</dbReference>
<dbReference type="GO" id="GO:0005524">
    <property type="term" value="F:ATP binding"/>
    <property type="evidence" value="ECO:0007669"/>
    <property type="project" value="UniProtKB-KW"/>
</dbReference>
<dbReference type="GO" id="GO:0016301">
    <property type="term" value="F:kinase activity"/>
    <property type="evidence" value="ECO:0000318"/>
    <property type="project" value="GO_Central"/>
</dbReference>
<dbReference type="GO" id="GO:0102194">
    <property type="term" value="F:protein-fructosamine 3-kinase activity"/>
    <property type="evidence" value="ECO:0000314"/>
    <property type="project" value="UniProtKB"/>
</dbReference>
<dbReference type="GO" id="GO:0102193">
    <property type="term" value="F:protein-ribulosamine 3-kinase activity"/>
    <property type="evidence" value="ECO:0007669"/>
    <property type="project" value="UniProtKB-EC"/>
</dbReference>
<dbReference type="GO" id="GO:0030855">
    <property type="term" value="P:epithelial cell differentiation"/>
    <property type="evidence" value="ECO:0000270"/>
    <property type="project" value="UniProtKB"/>
</dbReference>
<dbReference type="GO" id="GO:0030389">
    <property type="term" value="P:fructosamine metabolic process"/>
    <property type="evidence" value="ECO:0000318"/>
    <property type="project" value="GO_Central"/>
</dbReference>
<dbReference type="GO" id="GO:0030393">
    <property type="term" value="P:fructoselysine metabolic process"/>
    <property type="evidence" value="ECO:0000303"/>
    <property type="project" value="UniProtKB"/>
</dbReference>
<dbReference type="GO" id="GO:0043687">
    <property type="term" value="P:post-translational protein modification"/>
    <property type="evidence" value="ECO:0000304"/>
    <property type="project" value="Reactome"/>
</dbReference>
<dbReference type="GO" id="GO:0036525">
    <property type="term" value="P:protein deglycation"/>
    <property type="evidence" value="ECO:0000314"/>
    <property type="project" value="UniProtKB"/>
</dbReference>
<dbReference type="FunFam" id="3.90.1200.10:FF:000003">
    <property type="entry name" value="fructosamine-3-kinase isoform X1"/>
    <property type="match status" value="1"/>
</dbReference>
<dbReference type="FunFam" id="3.30.200.20:FF:000264">
    <property type="entry name" value="Protein-ribulosamine 3-kinase, chloroplastic"/>
    <property type="match status" value="1"/>
</dbReference>
<dbReference type="Gene3D" id="3.90.1200.10">
    <property type="match status" value="1"/>
</dbReference>
<dbReference type="Gene3D" id="3.30.200.20">
    <property type="entry name" value="Phosphorylase Kinase, domain 1"/>
    <property type="match status" value="1"/>
</dbReference>
<dbReference type="InterPro" id="IPR016477">
    <property type="entry name" value="Fructo-/Ketosamine-3-kinase"/>
</dbReference>
<dbReference type="InterPro" id="IPR011009">
    <property type="entry name" value="Kinase-like_dom_sf"/>
</dbReference>
<dbReference type="PANTHER" id="PTHR12149">
    <property type="entry name" value="FRUCTOSAMINE 3 KINASE-RELATED PROTEIN"/>
    <property type="match status" value="1"/>
</dbReference>
<dbReference type="PANTHER" id="PTHR12149:SF9">
    <property type="entry name" value="FRUCTOSAMINE-3-KINASE"/>
    <property type="match status" value="1"/>
</dbReference>
<dbReference type="Pfam" id="PF03881">
    <property type="entry name" value="Fructosamin_kin"/>
    <property type="match status" value="1"/>
</dbReference>
<dbReference type="PIRSF" id="PIRSF006221">
    <property type="entry name" value="Ketosamine-3-kinase"/>
    <property type="match status" value="1"/>
</dbReference>
<dbReference type="SUPFAM" id="SSF56112">
    <property type="entry name" value="Protein kinase-like (PK-like)"/>
    <property type="match status" value="1"/>
</dbReference>
<comment type="function">
    <text evidence="2 4 5 6 7">Fructosamine-3-kinase involved in protein deglycation by mediating phosphorylation of fructoselysine residues on glycated proteins, to generate fructoselysine-3 phosphate (PubMed:11016445, PubMed:11522682, PubMed:11975663). Fructoselysine-3 phosphate adducts are unstable and decompose under physiological conditions (PubMed:11522682, PubMed:11975663). Involved in intracellular deglycation in erythrocytes (PubMed:11975663). Involved in the response to oxidative stress by mediating deglycation of NFE2L2/NRF2, glycation impairing NFE2L2/NRF2 function (By similarity). Also able to phosphorylate psicosamines and ribulosamines (PubMed:14633848).</text>
</comment>
<comment type="catalytic activity">
    <reaction evidence="4 5">
        <text>N(6)-(D-fructosyl)-L-lysyl-[protein] + ATP = N(6)-(3-O-phospho-D-fructosyl)-L-lysyl-[protein] + ADP + H(+)</text>
        <dbReference type="Rhea" id="RHEA:59832"/>
        <dbReference type="Rhea" id="RHEA-COMP:15451"/>
        <dbReference type="Rhea" id="RHEA-COMP:15452"/>
        <dbReference type="ChEBI" id="CHEBI:15378"/>
        <dbReference type="ChEBI" id="CHEBI:30616"/>
        <dbReference type="ChEBI" id="CHEBI:143253"/>
        <dbReference type="ChEBI" id="CHEBI:143254"/>
        <dbReference type="ChEBI" id="CHEBI:456216"/>
        <dbReference type="EC" id="2.7.1.171"/>
    </reaction>
    <physiologicalReaction direction="left-to-right" evidence="4 5">
        <dbReference type="Rhea" id="RHEA:59833"/>
    </physiologicalReaction>
</comment>
<comment type="catalytic activity">
    <reaction evidence="7">
        <text>N(6)-D-ribulosyl-L-lysyl-[protein] + ATP = N(6)-(3-O-phospho-D-ribulosyl)-L-lysyl-[protein] + ADP + H(+)</text>
        <dbReference type="Rhea" id="RHEA:48432"/>
        <dbReference type="Rhea" id="RHEA-COMP:12103"/>
        <dbReference type="Rhea" id="RHEA-COMP:12104"/>
        <dbReference type="ChEBI" id="CHEBI:15378"/>
        <dbReference type="ChEBI" id="CHEBI:30616"/>
        <dbReference type="ChEBI" id="CHEBI:90418"/>
        <dbReference type="ChEBI" id="CHEBI:90420"/>
        <dbReference type="ChEBI" id="CHEBI:456216"/>
        <dbReference type="EC" id="2.7.1.172"/>
    </reaction>
    <physiologicalReaction direction="left-to-right" evidence="7">
        <dbReference type="Rhea" id="RHEA:48433"/>
    </physiologicalReaction>
</comment>
<comment type="catalytic activity">
    <reaction evidence="7">
        <text>N(6)-(D-psicosyl)-L-lysyl-[protein] + ATP = N(6)-(3-O-phospho-D-psicosyl)-L-lysyl-[protein] + ADP + H(+)</text>
        <dbReference type="Rhea" id="RHEA:61392"/>
        <dbReference type="Rhea" id="RHEA-COMP:15796"/>
        <dbReference type="Rhea" id="RHEA-COMP:15797"/>
        <dbReference type="ChEBI" id="CHEBI:15378"/>
        <dbReference type="ChEBI" id="CHEBI:30616"/>
        <dbReference type="ChEBI" id="CHEBI:144621"/>
        <dbReference type="ChEBI" id="CHEBI:144622"/>
        <dbReference type="ChEBI" id="CHEBI:456216"/>
    </reaction>
    <physiologicalReaction direction="left-to-right" evidence="7">
        <dbReference type="Rhea" id="RHEA:61393"/>
    </physiologicalReaction>
</comment>
<comment type="biophysicochemical properties">
    <kinetics>
        <KM evidence="7">10 uM for deoxymorpholinofructose</KM>
        <KM evidence="7">160 uM for deoxymorpholinopsicose</KM>
        <KM evidence="7">140 uM for Psicoselysine</KM>
        <KM evidence="7">2.6 uM for deoxymorpholinoribulose</KM>
    </kinetics>
</comment>
<comment type="subunit">
    <text evidence="4">Monomer.</text>
</comment>
<comment type="tissue specificity">
    <text evidence="4 5">Widely expressed (PubMed:11522682). Expressed in erythrocytes (PubMed:11016445).</text>
</comment>
<comment type="similarity">
    <text evidence="10">Belongs to the fructosamine kinase family.</text>
</comment>
<gene>
    <name evidence="9 11" type="primary">FN3K</name>
</gene>
<feature type="chain" id="PRO_0000216337" description="Fructosamine-3-kinase">
    <location>
        <begin position="1"/>
        <end position="309"/>
    </location>
</feature>
<feature type="active site" description="Proton acceptor" evidence="1">
    <location>
        <position position="217"/>
    </location>
</feature>
<feature type="binding site" evidence="3">
    <location>
        <begin position="89"/>
        <end position="91"/>
    </location>
    <ligand>
        <name>ATP</name>
        <dbReference type="ChEBI" id="CHEBI:30616"/>
    </ligand>
</feature>
<feature type="modified residue" description="N-acetylmethionine" evidence="4">
    <location>
        <position position="1"/>
    </location>
</feature>
<feature type="helix" evidence="13">
    <location>
        <begin position="1"/>
        <end position="9"/>
    </location>
</feature>
<feature type="strand" evidence="13">
    <location>
        <begin position="14"/>
        <end position="17"/>
    </location>
</feature>
<feature type="helix" evidence="12">
    <location>
        <begin position="20"/>
        <end position="23"/>
    </location>
</feature>
<feature type="turn" evidence="13">
    <location>
        <begin position="25"/>
        <end position="27"/>
    </location>
</feature>
<feature type="strand" evidence="13">
    <location>
        <begin position="29"/>
        <end position="33"/>
    </location>
</feature>
<feature type="strand" evidence="13">
    <location>
        <begin position="38"/>
        <end position="43"/>
    </location>
</feature>
<feature type="helix" evidence="13">
    <location>
        <begin position="48"/>
        <end position="65"/>
    </location>
</feature>
<feature type="strand" evidence="13">
    <location>
        <begin position="66"/>
        <end position="68"/>
    </location>
</feature>
<feature type="strand" evidence="13">
    <location>
        <begin position="73"/>
        <end position="78"/>
    </location>
</feature>
<feature type="strand" evidence="13">
    <location>
        <begin position="84"/>
        <end position="89"/>
    </location>
</feature>
<feature type="strand" evidence="12">
    <location>
        <begin position="94"/>
        <end position="97"/>
    </location>
</feature>
<feature type="helix" evidence="13">
    <location>
        <begin position="100"/>
        <end position="116"/>
    </location>
</feature>
<feature type="strand" evidence="13">
    <location>
        <begin position="142"/>
        <end position="144"/>
    </location>
</feature>
<feature type="strand" evidence="14">
    <location>
        <begin position="149"/>
        <end position="151"/>
    </location>
</feature>
<feature type="strand" evidence="14">
    <location>
        <begin position="154"/>
        <end position="156"/>
    </location>
</feature>
<feature type="strand" evidence="12">
    <location>
        <begin position="161"/>
        <end position="163"/>
    </location>
</feature>
<feature type="helix" evidence="13">
    <location>
        <begin position="164"/>
        <end position="171"/>
    </location>
</feature>
<feature type="helix" evidence="13">
    <location>
        <begin position="173"/>
        <end position="184"/>
    </location>
</feature>
<feature type="helix" evidence="13">
    <location>
        <begin position="187"/>
        <end position="199"/>
    </location>
</feature>
<feature type="helix" evidence="13">
    <location>
        <begin position="200"/>
        <end position="203"/>
    </location>
</feature>
<feature type="turn" evidence="13">
    <location>
        <begin position="204"/>
        <end position="206"/>
    </location>
</feature>
<feature type="strand" evidence="13">
    <location>
        <begin position="212"/>
        <end position="214"/>
    </location>
</feature>
<feature type="helix" evidence="13">
    <location>
        <begin position="220"/>
        <end position="222"/>
    </location>
</feature>
<feature type="strand" evidence="13">
    <location>
        <begin position="223"/>
        <end position="225"/>
    </location>
</feature>
<feature type="strand" evidence="13">
    <location>
        <begin position="230"/>
        <end position="232"/>
    </location>
</feature>
<feature type="strand" evidence="13">
    <location>
        <begin position="238"/>
        <end position="240"/>
    </location>
</feature>
<feature type="helix" evidence="13">
    <location>
        <begin position="242"/>
        <end position="252"/>
    </location>
</feature>
<feature type="helix" evidence="13">
    <location>
        <begin position="257"/>
        <end position="266"/>
    </location>
</feature>
<feature type="helix" evidence="13">
    <location>
        <begin position="273"/>
        <end position="292"/>
    </location>
</feature>
<feature type="helix" evidence="13">
    <location>
        <begin position="294"/>
        <end position="296"/>
    </location>
</feature>
<feature type="helix" evidence="13">
    <location>
        <begin position="297"/>
        <end position="308"/>
    </location>
</feature>
<reference key="1">
    <citation type="journal article" date="2000" name="Diabetes">
        <title>Identification, cloning, and heterologous expression of a mammalian fructosamine-3-kinase.</title>
        <authorList>
            <person name="Delpierre G."/>
            <person name="Rider M.H."/>
            <person name="Collard F."/>
            <person name="Stroobant V."/>
            <person name="Vanstapel F."/>
            <person name="Santos H."/>
            <person name="Van Schaftingen E."/>
        </authorList>
    </citation>
    <scope>NUCLEOTIDE SEQUENCE [MRNA]</scope>
    <scope>PROTEIN SEQUENCE OF 1-6; 30-41; 50-63; 76-92; 103-116; 121-130 AND 173-190</scope>
    <scope>ACETYLATION AT MET-1</scope>
    <scope>FUNCTION</scope>
    <scope>CATALYTIC ACTIVITY</scope>
    <scope>SUBUNIT</scope>
    <scope>TISSUE SPECIFICITY</scope>
    <source>
        <tissue>Kidney</tissue>
    </source>
</reference>
<reference key="2">
    <citation type="journal article" date="2004" name="Genome Res.">
        <title>The status, quality, and expansion of the NIH full-length cDNA project: the Mammalian Gene Collection (MGC).</title>
        <authorList>
            <consortium name="The MGC Project Team"/>
        </authorList>
    </citation>
    <scope>NUCLEOTIDE SEQUENCE [LARGE SCALE MRNA]</scope>
    <source>
        <tissue>Brain</tissue>
    </source>
</reference>
<reference key="3">
    <citation type="journal article" date="2001" name="Diabetes">
        <title>Human fructosamine-3-kinase: purification, sequencing, substrate specificity, and evidence of activity in vivo.</title>
        <authorList>
            <person name="Szwergold B.S."/>
            <person name="Howell S."/>
            <person name="Beisswenger P.J."/>
        </authorList>
    </citation>
    <scope>PROTEIN SEQUENCE OF 16-26; 30-41; 76-92; 103-116; 119-130; 132-142; 173-187; 258-265; 270-276 AND 298-305</scope>
    <scope>FUNCTION</scope>
    <scope>CATALYTIC ACTIVITY</scope>
    <scope>TISSUE SPECIFICITY</scope>
</reference>
<reference key="4">
    <citation type="journal article" date="2011" name="BMC Syst. Biol.">
        <title>Initial characterization of the human central proteome.</title>
        <authorList>
            <person name="Burkard T.R."/>
            <person name="Planyavsky M."/>
            <person name="Kaupe I."/>
            <person name="Breitwieser F.P."/>
            <person name="Buerckstuemmer T."/>
            <person name="Bennett K.L."/>
            <person name="Superti-Furga G."/>
            <person name="Colinge J."/>
        </authorList>
    </citation>
    <scope>IDENTIFICATION BY MASS SPECTROMETRY [LARGE SCALE ANALYSIS]</scope>
</reference>
<reference key="5">
    <citation type="journal article" date="2002" name="Biochem. J.">
        <title>Fructosamine 3-kinase is involved in an intracellular deglycation pathway in human erythrocytes.</title>
        <authorList>
            <person name="Delpierre G."/>
            <person name="Collard F."/>
            <person name="Fortpied J."/>
            <person name="Van Schaftingen E."/>
        </authorList>
    </citation>
    <scope>FUNCTION</scope>
</reference>
<reference key="6">
    <citation type="journal article" date="2003" name="Diabetes">
        <title>A mammalian protein homologous to fructosamine-3-kinase is a ketosamine-3-kinase acting on psicosamines and ribulosamines but not on fructosamines.</title>
        <authorList>
            <person name="Collard F."/>
            <person name="Delpierre G."/>
            <person name="Stroobant V."/>
            <person name="Matthijs G."/>
            <person name="Van Schaftingen E."/>
        </authorList>
    </citation>
    <scope>FUNCTION</scope>
    <scope>CATALYTIC ACTIVITY</scope>
    <scope>BIOPHYSICOCHEMICAL PROPERTIES</scope>
</reference>
<sequence>MEQLLRAELRTATLRAFGGPGAGCISEGRAYDTDAGPVFVKVNRRTQARQMFEGEVASLEALRSTGLVRVPRPMKVIDLPGGGAAFVMEHLKMKSLSSQASKLGEQMADLHLYNQKLREKLKEEENTVGRRGEGAEPQYVDKFGFHTVTCCGFIPQVNEWQDDWPTFFARHRLQAQLDLIEKDYADREARELWSRLQVKIPDLFCGLEIVPALLHGDLWSGNVAEDDVGPIIYDPASFYGHSEFELAIALMFGGFPRSFFTAYHRKIPKAPGFDQRLLLYQLFNYLNHWNHFGREYRSPSLGTMRRLLK</sequence>
<protein>
    <recommendedName>
        <fullName evidence="8">Fructosamine-3-kinase</fullName>
        <ecNumber evidence="4 5">2.7.1.171</ecNumber>
    </recommendedName>
    <alternativeName>
        <fullName evidence="10">Protein-psicosamine 3-kinase FN3K</fullName>
    </alternativeName>
    <alternativeName>
        <fullName evidence="10">Protein-ribulosamine 3-kinase FN3K</fullName>
        <ecNumber evidence="7">2.7.1.172</ecNumber>
    </alternativeName>
</protein>
<name>FN3K_HUMAN</name>
<accession>Q9H479</accession>
<evidence type="ECO:0000250" key="1">
    <source>
        <dbReference type="UniProtKB" id="P9WI99"/>
    </source>
</evidence>
<evidence type="ECO:0000250" key="2">
    <source>
        <dbReference type="UniProtKB" id="Q9ER35"/>
    </source>
</evidence>
<evidence type="ECO:0000250" key="3">
    <source>
        <dbReference type="UniProtKB" id="Q9HA64"/>
    </source>
</evidence>
<evidence type="ECO:0000269" key="4">
    <source>
    </source>
</evidence>
<evidence type="ECO:0000269" key="5">
    <source>
    </source>
</evidence>
<evidence type="ECO:0000269" key="6">
    <source>
    </source>
</evidence>
<evidence type="ECO:0000269" key="7">
    <source>
    </source>
</evidence>
<evidence type="ECO:0000303" key="8">
    <source>
    </source>
</evidence>
<evidence type="ECO:0000303" key="9">
    <source>
    </source>
</evidence>
<evidence type="ECO:0000305" key="10"/>
<evidence type="ECO:0000312" key="11">
    <source>
        <dbReference type="HGNC" id="HGNC:24822"/>
    </source>
</evidence>
<evidence type="ECO:0007829" key="12">
    <source>
        <dbReference type="PDB" id="8UE1"/>
    </source>
</evidence>
<evidence type="ECO:0007829" key="13">
    <source>
        <dbReference type="PDB" id="9CX8"/>
    </source>
</evidence>
<evidence type="ECO:0007829" key="14">
    <source>
        <dbReference type="PDB" id="9CXO"/>
    </source>
</evidence>
<organism>
    <name type="scientific">Homo sapiens</name>
    <name type="common">Human</name>
    <dbReference type="NCBI Taxonomy" id="9606"/>
    <lineage>
        <taxon>Eukaryota</taxon>
        <taxon>Metazoa</taxon>
        <taxon>Chordata</taxon>
        <taxon>Craniata</taxon>
        <taxon>Vertebrata</taxon>
        <taxon>Euteleostomi</taxon>
        <taxon>Mammalia</taxon>
        <taxon>Eutheria</taxon>
        <taxon>Euarchontoglires</taxon>
        <taxon>Primates</taxon>
        <taxon>Haplorrhini</taxon>
        <taxon>Catarrhini</taxon>
        <taxon>Hominidae</taxon>
        <taxon>Homo</taxon>
    </lineage>
</organism>